<accession>B2IRR1</accession>
<organism>
    <name type="scientific">Streptococcus pneumoniae (strain CGSP14)</name>
    <dbReference type="NCBI Taxonomy" id="516950"/>
    <lineage>
        <taxon>Bacteria</taxon>
        <taxon>Bacillati</taxon>
        <taxon>Bacillota</taxon>
        <taxon>Bacilli</taxon>
        <taxon>Lactobacillales</taxon>
        <taxon>Streptococcaceae</taxon>
        <taxon>Streptococcus</taxon>
    </lineage>
</organism>
<reference key="1">
    <citation type="journal article" date="2009" name="BMC Genomics">
        <title>Genome evolution driven by host adaptations results in a more virulent and antimicrobial-resistant Streptococcus pneumoniae serotype 14.</title>
        <authorList>
            <person name="Ding F."/>
            <person name="Tang P."/>
            <person name="Hsu M.-H."/>
            <person name="Cui P."/>
            <person name="Hu S."/>
            <person name="Yu J."/>
            <person name="Chiu C.-H."/>
        </authorList>
    </citation>
    <scope>NUCLEOTIDE SEQUENCE [LARGE SCALE GENOMIC DNA]</scope>
    <source>
        <strain>CGSP14</strain>
    </source>
</reference>
<sequence>MVKLVFARHGESEWNKANLFTGWADVDLSEKGTQQAIDAGKLIKEAGIKFDQAYTSVLKRAIKTTNLALEASDQLWVPVEKSWRLNERHYGGLTGKNKAEAAEQFGDEQVHIWRRSYDVLPPNMDRDDEHSAHTDRRYASLDDSVIPDAENLKVTLERALPFWEDKIAPALKDGKNVFVGAHGNSIRALVKHIKGLSDDEIMDVEIPNFPPLVFEFDEKLNVVSEYYLGK</sequence>
<feature type="chain" id="PRO_1000135985" description="2,3-bisphosphoglycerate-dependent phosphoglycerate mutase">
    <location>
        <begin position="1"/>
        <end position="230"/>
    </location>
</feature>
<feature type="active site" description="Tele-phosphohistidine intermediate" evidence="1">
    <location>
        <position position="9"/>
    </location>
</feature>
<feature type="active site" description="Proton donor/acceptor" evidence="1">
    <location>
        <position position="87"/>
    </location>
</feature>
<feature type="binding site" evidence="1">
    <location>
        <begin position="8"/>
        <end position="15"/>
    </location>
    <ligand>
        <name>substrate</name>
    </ligand>
</feature>
<feature type="binding site" evidence="1">
    <location>
        <begin position="21"/>
        <end position="22"/>
    </location>
    <ligand>
        <name>substrate</name>
    </ligand>
</feature>
<feature type="binding site" evidence="1">
    <location>
        <position position="60"/>
    </location>
    <ligand>
        <name>substrate</name>
    </ligand>
</feature>
<feature type="binding site" evidence="1">
    <location>
        <begin position="87"/>
        <end position="90"/>
    </location>
    <ligand>
        <name>substrate</name>
    </ligand>
</feature>
<feature type="binding site" evidence="1">
    <location>
        <position position="98"/>
    </location>
    <ligand>
        <name>substrate</name>
    </ligand>
</feature>
<feature type="binding site" evidence="1">
    <location>
        <begin position="114"/>
        <end position="115"/>
    </location>
    <ligand>
        <name>substrate</name>
    </ligand>
</feature>
<feature type="binding site" evidence="1">
    <location>
        <begin position="183"/>
        <end position="184"/>
    </location>
    <ligand>
        <name>substrate</name>
    </ligand>
</feature>
<feature type="site" description="Transition state stabilizer" evidence="1">
    <location>
        <position position="182"/>
    </location>
</feature>
<comment type="function">
    <text evidence="1">Catalyzes the interconversion of 2-phosphoglycerate and 3-phosphoglycerate.</text>
</comment>
<comment type="catalytic activity">
    <reaction evidence="1">
        <text>(2R)-2-phosphoglycerate = (2R)-3-phosphoglycerate</text>
        <dbReference type="Rhea" id="RHEA:15901"/>
        <dbReference type="ChEBI" id="CHEBI:58272"/>
        <dbReference type="ChEBI" id="CHEBI:58289"/>
        <dbReference type="EC" id="5.4.2.11"/>
    </reaction>
</comment>
<comment type="pathway">
    <text evidence="1">Carbohydrate degradation; glycolysis; pyruvate from D-glyceraldehyde 3-phosphate: step 3/5.</text>
</comment>
<comment type="similarity">
    <text evidence="1">Belongs to the phosphoglycerate mutase family. BPG-dependent PGAM subfamily.</text>
</comment>
<proteinExistence type="inferred from homology"/>
<evidence type="ECO:0000255" key="1">
    <source>
        <dbReference type="HAMAP-Rule" id="MF_01039"/>
    </source>
</evidence>
<protein>
    <recommendedName>
        <fullName evidence="1">2,3-bisphosphoglycerate-dependent phosphoglycerate mutase</fullName>
        <shortName evidence="1">BPG-dependent PGAM</shortName>
        <shortName evidence="1">PGAM</shortName>
        <shortName evidence="1">Phosphoglyceromutase</shortName>
        <shortName evidence="1">dPGM</shortName>
        <ecNumber evidence="1">5.4.2.11</ecNumber>
    </recommendedName>
</protein>
<keyword id="KW-0312">Gluconeogenesis</keyword>
<keyword id="KW-0324">Glycolysis</keyword>
<keyword id="KW-0413">Isomerase</keyword>
<name>GPMA_STRPS</name>
<gene>
    <name evidence="1" type="primary">gpmA</name>
    <name type="ordered locus">SPCG_1628</name>
</gene>
<dbReference type="EC" id="5.4.2.11" evidence="1"/>
<dbReference type="EMBL" id="CP001033">
    <property type="protein sequence ID" value="ACB90880.1"/>
    <property type="molecule type" value="Genomic_DNA"/>
</dbReference>
<dbReference type="RefSeq" id="WP_000240132.1">
    <property type="nucleotide sequence ID" value="NC_010582.1"/>
</dbReference>
<dbReference type="SMR" id="B2IRR1"/>
<dbReference type="KEGG" id="spw:SPCG_1628"/>
<dbReference type="HOGENOM" id="CLU_033323_1_5_9"/>
<dbReference type="UniPathway" id="UPA00109">
    <property type="reaction ID" value="UER00186"/>
</dbReference>
<dbReference type="GO" id="GO:0004619">
    <property type="term" value="F:phosphoglycerate mutase activity"/>
    <property type="evidence" value="ECO:0007669"/>
    <property type="project" value="UniProtKB-EC"/>
</dbReference>
<dbReference type="GO" id="GO:0006094">
    <property type="term" value="P:gluconeogenesis"/>
    <property type="evidence" value="ECO:0007669"/>
    <property type="project" value="UniProtKB-UniRule"/>
</dbReference>
<dbReference type="GO" id="GO:0006096">
    <property type="term" value="P:glycolytic process"/>
    <property type="evidence" value="ECO:0007669"/>
    <property type="project" value="UniProtKB-UniRule"/>
</dbReference>
<dbReference type="CDD" id="cd07067">
    <property type="entry name" value="HP_PGM_like"/>
    <property type="match status" value="1"/>
</dbReference>
<dbReference type="FunFam" id="3.40.50.1240:FF:000003">
    <property type="entry name" value="2,3-bisphosphoglycerate-dependent phosphoglycerate mutase"/>
    <property type="match status" value="1"/>
</dbReference>
<dbReference type="Gene3D" id="3.40.50.1240">
    <property type="entry name" value="Phosphoglycerate mutase-like"/>
    <property type="match status" value="1"/>
</dbReference>
<dbReference type="HAMAP" id="MF_01039">
    <property type="entry name" value="PGAM_GpmA"/>
    <property type="match status" value="1"/>
</dbReference>
<dbReference type="InterPro" id="IPR013078">
    <property type="entry name" value="His_Pase_superF_clade-1"/>
</dbReference>
<dbReference type="InterPro" id="IPR029033">
    <property type="entry name" value="His_PPase_superfam"/>
</dbReference>
<dbReference type="InterPro" id="IPR005952">
    <property type="entry name" value="Phosphogly_mut1"/>
</dbReference>
<dbReference type="NCBIfam" id="TIGR01258">
    <property type="entry name" value="pgm_1"/>
    <property type="match status" value="1"/>
</dbReference>
<dbReference type="NCBIfam" id="NF010713">
    <property type="entry name" value="PRK14115.1"/>
    <property type="match status" value="1"/>
</dbReference>
<dbReference type="NCBIfam" id="NF010715">
    <property type="entry name" value="PRK14117.1"/>
    <property type="match status" value="1"/>
</dbReference>
<dbReference type="PANTHER" id="PTHR11931">
    <property type="entry name" value="PHOSPHOGLYCERATE MUTASE"/>
    <property type="match status" value="1"/>
</dbReference>
<dbReference type="Pfam" id="PF00300">
    <property type="entry name" value="His_Phos_1"/>
    <property type="match status" value="1"/>
</dbReference>
<dbReference type="PIRSF" id="PIRSF000709">
    <property type="entry name" value="6PFK_2-Ptase"/>
    <property type="match status" value="1"/>
</dbReference>
<dbReference type="SMART" id="SM00855">
    <property type="entry name" value="PGAM"/>
    <property type="match status" value="1"/>
</dbReference>
<dbReference type="SUPFAM" id="SSF53254">
    <property type="entry name" value="Phosphoglycerate mutase-like"/>
    <property type="match status" value="1"/>
</dbReference>